<dbReference type="SMR" id="P25517"/>
<dbReference type="GO" id="GO:0005576">
    <property type="term" value="C:extracellular region"/>
    <property type="evidence" value="ECO:0007669"/>
    <property type="project" value="UniProtKB-SubCell"/>
</dbReference>
<dbReference type="GO" id="GO:0016020">
    <property type="term" value="C:membrane"/>
    <property type="evidence" value="ECO:0007669"/>
    <property type="project" value="UniProtKB-KW"/>
</dbReference>
<dbReference type="GO" id="GO:0044218">
    <property type="term" value="C:other organism cell membrane"/>
    <property type="evidence" value="ECO:0007669"/>
    <property type="project" value="UniProtKB-KW"/>
</dbReference>
<dbReference type="GO" id="GO:0090729">
    <property type="term" value="F:toxin activity"/>
    <property type="evidence" value="ECO:0007669"/>
    <property type="project" value="UniProtKB-KW"/>
</dbReference>
<dbReference type="GO" id="GO:0031640">
    <property type="term" value="P:killing of cells of another organism"/>
    <property type="evidence" value="ECO:0007669"/>
    <property type="project" value="UniProtKB-KW"/>
</dbReference>
<dbReference type="CDD" id="cd00206">
    <property type="entry name" value="TFP_snake_toxin"/>
    <property type="match status" value="1"/>
</dbReference>
<dbReference type="FunFam" id="2.10.60.10:FF:000024">
    <property type="entry name" value="Cytotoxin 1"/>
    <property type="match status" value="1"/>
</dbReference>
<dbReference type="Gene3D" id="2.10.60.10">
    <property type="entry name" value="CD59"/>
    <property type="match status" value="1"/>
</dbReference>
<dbReference type="InterPro" id="IPR003572">
    <property type="entry name" value="Cytotoxin_Cobra"/>
</dbReference>
<dbReference type="InterPro" id="IPR003571">
    <property type="entry name" value="Snake_3FTx"/>
</dbReference>
<dbReference type="InterPro" id="IPR045860">
    <property type="entry name" value="Snake_toxin-like_sf"/>
</dbReference>
<dbReference type="InterPro" id="IPR018354">
    <property type="entry name" value="Snake_toxin_con_site"/>
</dbReference>
<dbReference type="InterPro" id="IPR054131">
    <property type="entry name" value="Toxin_cobra-type"/>
</dbReference>
<dbReference type="Pfam" id="PF21947">
    <property type="entry name" value="Toxin_cobra-type"/>
    <property type="match status" value="1"/>
</dbReference>
<dbReference type="PRINTS" id="PR00282">
    <property type="entry name" value="CYTOTOXIN"/>
</dbReference>
<dbReference type="SUPFAM" id="SSF57302">
    <property type="entry name" value="Snake toxin-like"/>
    <property type="match status" value="1"/>
</dbReference>
<dbReference type="PROSITE" id="PS00272">
    <property type="entry name" value="SNAKE_TOXIN"/>
    <property type="match status" value="1"/>
</dbReference>
<organism>
    <name type="scientific">Naja mossambica</name>
    <name type="common">Mozambique spitting cobra</name>
    <dbReference type="NCBI Taxonomy" id="8644"/>
    <lineage>
        <taxon>Eukaryota</taxon>
        <taxon>Metazoa</taxon>
        <taxon>Chordata</taxon>
        <taxon>Craniata</taxon>
        <taxon>Vertebrata</taxon>
        <taxon>Euteleostomi</taxon>
        <taxon>Lepidosauria</taxon>
        <taxon>Squamata</taxon>
        <taxon>Bifurcata</taxon>
        <taxon>Unidentata</taxon>
        <taxon>Episquamata</taxon>
        <taxon>Toxicofera</taxon>
        <taxon>Serpentes</taxon>
        <taxon>Colubroidea</taxon>
        <taxon>Elapidae</taxon>
        <taxon>Elapinae</taxon>
        <taxon>Naja</taxon>
    </lineage>
</organism>
<accession>P25517</accession>
<proteinExistence type="evidence at protein level"/>
<evidence type="ECO:0000250" key="1">
    <source>
        <dbReference type="UniProtKB" id="P60301"/>
    </source>
</evidence>
<evidence type="ECO:0000250" key="2">
    <source>
        <dbReference type="UniProtKB" id="P60304"/>
    </source>
</evidence>
<evidence type="ECO:0000269" key="3">
    <source>
    </source>
</evidence>
<evidence type="ECO:0000269" key="4">
    <source>
    </source>
</evidence>
<evidence type="ECO:0000303" key="5">
    <source>
    </source>
</evidence>
<evidence type="ECO:0000305" key="6"/>
<evidence type="ECO:0000305" key="7">
    <source>
    </source>
</evidence>
<comment type="function">
    <text evidence="1 2 4">Shows cytolytic activity on many different cells by forming pore in lipid membranes (PubMed:8182052). In vivo, increases heart rate or kills the animal by cardiac arrest. In addition, it binds to heparin with high affinity, interacts with Kv channel-interacting protein 1 (KCNIP1) in a calcium-independent manner, and binds to integrin alpha-V/beta-3 (ITGAV/ITGB3) with moderate affinity.</text>
</comment>
<comment type="subunit">
    <text evidence="1">Monomer in solution; Homodimer and oligomer in the presence of negatively charged lipids forming a pore with a size ranging between 20 and 30 Angstroms.</text>
</comment>
<comment type="subcellular location">
    <subcellularLocation>
        <location evidence="3">Secreted</location>
    </subcellularLocation>
    <subcellularLocation>
        <location evidence="1">Target cell membrane</location>
    </subcellularLocation>
</comment>
<comment type="tissue specificity">
    <text evidence="6">Expressed by the venom gland.</text>
</comment>
<comment type="toxic dose">
    <text evidence="3">LD(50) is 2.85 mg/kg by intravenous injection.</text>
</comment>
<comment type="miscellaneous">
    <text evidence="7">Is classified as a P-type cytotoxin, since a proline residue stands at position 30 (Pro-31 in standard classification).</text>
</comment>
<comment type="similarity">
    <text evidence="6">Belongs to the three-finger toxin family. Short-chain subfamily. Type IA cytotoxin sub-subfamily.</text>
</comment>
<name>3SA5_NAJMO</name>
<feature type="chain" id="PRO_0000093509" description="Cytotoxin 5" evidence="3">
    <location>
        <begin position="1"/>
        <end position="60"/>
    </location>
</feature>
<feature type="disulfide bond" evidence="1">
    <location>
        <begin position="3"/>
        <end position="21"/>
    </location>
</feature>
<feature type="disulfide bond" evidence="1">
    <location>
        <begin position="14"/>
        <end position="38"/>
    </location>
</feature>
<feature type="disulfide bond" evidence="1">
    <location>
        <begin position="42"/>
        <end position="53"/>
    </location>
</feature>
<feature type="disulfide bond" evidence="1">
    <location>
        <begin position="54"/>
        <end position="59"/>
    </location>
</feature>
<reference key="1">
    <citation type="journal article" date="1983" name="Mol. Cell. Biochem.">
        <title>Are interactions with phospholipids responsible for pharmacological activities of cardiotoxins?</title>
        <authorList>
            <person name="Bougis P.E."/>
            <person name="Tessier M."/>
            <person name="van Rietschoten J."/>
            <person name="Rochat H."/>
            <person name="Faucon J.F."/>
            <person name="Dufourcq J."/>
        </authorList>
    </citation>
    <scope>PROTEIN SEQUENCE</scope>
    <scope>SUBCELLULAR LOCATION</scope>
    <scope>TOXIC DOSE</scope>
    <source>
        <tissue>Venom</tissue>
    </source>
</reference>
<reference key="2">
    <citation type="journal article" date="1994" name="J. Biol. Chem.">
        <title>Two distinct types of cardiotoxin as revealed by the structure and activity relationship of their interaction with zwitterionic phospholipid dispersions.</title>
        <authorList>
            <person name="Chien K.-Y."/>
            <person name="Chiang C.-M."/>
            <person name="Hseu Y.-C."/>
            <person name="Vyas A.A."/>
            <person name="Rule G.S."/>
            <person name="Wu W.-G."/>
        </authorList>
    </citation>
    <scope>FUNCTION</scope>
    <scope>APPARTENANCE TO P-TYPE CYTOTOXIN GROUP</scope>
</reference>
<sequence length="60" mass="6845">LKCKKLIPLFSKTCPEGKNLCYKMTMRLAPKVPVKRGCIDVCPKSSFLVKYECCDTDRCN</sequence>
<keyword id="KW-0123">Cardiotoxin</keyword>
<keyword id="KW-0204">Cytolysis</keyword>
<keyword id="KW-0903">Direct protein sequencing</keyword>
<keyword id="KW-1015">Disulfide bond</keyword>
<keyword id="KW-0472">Membrane</keyword>
<keyword id="KW-0964">Secreted</keyword>
<keyword id="KW-1052">Target cell membrane</keyword>
<keyword id="KW-1053">Target membrane</keyword>
<keyword id="KW-0800">Toxin</keyword>
<protein>
    <recommendedName>
        <fullName>Cytotoxin 5</fullName>
    </recommendedName>
    <alternativeName>
        <fullName evidence="5">CTX M5</fullName>
    </alternativeName>
    <alternativeName>
        <fullName>CTX V</fullName>
    </alternativeName>
</protein>